<feature type="signal peptide" evidence="1">
    <location>
        <begin position="1"/>
        <end position="23"/>
    </location>
</feature>
<feature type="chain" id="PRO_0000278583" description="UPF0412 protein YaaI">
    <location>
        <begin position="24"/>
        <end position="134"/>
    </location>
</feature>
<gene>
    <name evidence="1" type="primary">yaaI</name>
    <name type="ordered locus">Ecok1_00110</name>
    <name type="ORF">APECO1_1966</name>
</gene>
<dbReference type="EMBL" id="CP000468">
    <property type="protein sequence ID" value="ABI99504.1"/>
    <property type="molecule type" value="Genomic_DNA"/>
</dbReference>
<dbReference type="RefSeq" id="WP_000843687.1">
    <property type="nucleotide sequence ID" value="NZ_CADILS010000013.1"/>
</dbReference>
<dbReference type="KEGG" id="ecv:APECO1_1966"/>
<dbReference type="HOGENOM" id="CLU_158661_0_0_6"/>
<dbReference type="Proteomes" id="UP000008216">
    <property type="component" value="Chromosome"/>
</dbReference>
<dbReference type="HAMAP" id="MF_01372">
    <property type="entry name" value="UPF0412"/>
    <property type="match status" value="1"/>
</dbReference>
<dbReference type="InterPro" id="IPR020240">
    <property type="entry name" value="UPF0412_YaaI"/>
</dbReference>
<dbReference type="NCBIfam" id="NF007541">
    <property type="entry name" value="PRK10154.1"/>
    <property type="match status" value="1"/>
</dbReference>
<dbReference type="Pfam" id="PF10807">
    <property type="entry name" value="DUF2541"/>
    <property type="match status" value="1"/>
</dbReference>
<proteinExistence type="inferred from homology"/>
<reference key="1">
    <citation type="journal article" date="2007" name="J. Bacteriol.">
        <title>The genome sequence of avian pathogenic Escherichia coli strain O1:K1:H7 shares strong similarities with human extraintestinal pathogenic E. coli genomes.</title>
        <authorList>
            <person name="Johnson T.J."/>
            <person name="Kariyawasam S."/>
            <person name="Wannemuehler Y."/>
            <person name="Mangiamele P."/>
            <person name="Johnson S.J."/>
            <person name="Doetkott C."/>
            <person name="Skyberg J.A."/>
            <person name="Lynne A.M."/>
            <person name="Johnson J.R."/>
            <person name="Nolan L.K."/>
        </authorList>
    </citation>
    <scope>NUCLEOTIDE SEQUENCE [LARGE SCALE GENOMIC DNA]</scope>
</reference>
<protein>
    <recommendedName>
        <fullName evidence="1">UPF0412 protein YaaI</fullName>
    </recommendedName>
</protein>
<name>YAAI_ECOK1</name>
<accession>A1A765</accession>
<organism>
    <name type="scientific">Escherichia coli O1:K1 / APEC</name>
    <dbReference type="NCBI Taxonomy" id="405955"/>
    <lineage>
        <taxon>Bacteria</taxon>
        <taxon>Pseudomonadati</taxon>
        <taxon>Pseudomonadota</taxon>
        <taxon>Gammaproteobacteria</taxon>
        <taxon>Enterobacterales</taxon>
        <taxon>Enterobacteriaceae</taxon>
        <taxon>Escherichia</taxon>
    </lineage>
</organism>
<evidence type="ECO:0000255" key="1">
    <source>
        <dbReference type="HAMAP-Rule" id="MF_01372"/>
    </source>
</evidence>
<comment type="similarity">
    <text evidence="1">Belongs to the UPF0412 family.</text>
</comment>
<sequence>MKSVITISASLAISLMLCCTAQANDHKILGVIAMPRNETNDLALKLPVCRIVKRIQLSADHGDLQLSGASIYFKATRSASQTLNIPSEIKEEQTTDWININSDNDNKRCVSKITFSGHTVNSSDMATLKIIGDD</sequence>
<keyword id="KW-1185">Reference proteome</keyword>
<keyword id="KW-0732">Signal</keyword>